<accession>P56700</accession>
<organism>
    <name type="scientific">Rattus norvegicus</name>
    <name type="common">Rat</name>
    <dbReference type="NCBI Taxonomy" id="10116"/>
    <lineage>
        <taxon>Eukaryota</taxon>
        <taxon>Metazoa</taxon>
        <taxon>Chordata</taxon>
        <taxon>Craniata</taxon>
        <taxon>Vertebrata</taxon>
        <taxon>Euteleostomi</taxon>
        <taxon>Mammalia</taxon>
        <taxon>Eutheria</taxon>
        <taxon>Euarchontoglires</taxon>
        <taxon>Glires</taxon>
        <taxon>Rodentia</taxon>
        <taxon>Myomorpha</taxon>
        <taxon>Muroidea</taxon>
        <taxon>Muridae</taxon>
        <taxon>Murinae</taxon>
        <taxon>Rattus</taxon>
    </lineage>
</organism>
<keyword id="KW-0343">GTPase activation</keyword>
<keyword id="KW-0449">Lipoprotein</keyword>
<keyword id="KW-0472">Membrane</keyword>
<keyword id="KW-0564">Palmitate</keyword>
<keyword id="KW-0597">Phosphoprotein</keyword>
<keyword id="KW-1185">Reference proteome</keyword>
<keyword id="KW-0734">Signal transduction inhibitor</keyword>
<proteinExistence type="evidence at transcript level"/>
<sequence>MCRTIATFPNTCLERAKEFKTRLGIFLHKSELSSDTGGNGKFEWASKLSKERSFSEDVLGWRESFQSLLNSKNGVAAFHAFLKTEFSEENLEFWLACEEFKKIRSATKLASRAHHIFDEYIRSEAPKEVNIDHETRELTKTNLQAATTSCFDVAQGKTRTLMEKDSYPRFLKSPAYRDLAAQASATSASGSSPAEPSHT</sequence>
<gene>
    <name type="primary">Rgs16</name>
    <name type="synonym">Rgsr</name>
</gene>
<comment type="function">
    <text evidence="2">Regulates G protein-coupled receptor signaling cascades. Inhibits signal transduction by increasing the GTPase activity of G protein alpha subunits, thereby driving them into their inactive GDP-bound form. Plays an important role in the phototransduction cascade by regulating the lifetime and effective concentration of activated transducin alpha. May regulate extra and intracellular mitogenic signals.</text>
</comment>
<comment type="subunit">
    <text evidence="1 2">Interacts with GNAI1 and GNAQ. Interacts with GNAI3, GNAI3 and GNAO1.</text>
</comment>
<comment type="subcellular location">
    <subcellularLocation>
        <location evidence="2">Membrane</location>
        <topology evidence="2">Lipid-anchor</topology>
    </subcellularLocation>
</comment>
<comment type="tissue specificity">
    <text evidence="4">Predominantly found in the retina. Some expression has been found in the liver.</text>
</comment>
<comment type="PTM">
    <text evidence="2">Palmitoylated on Cys-2 and/or Cys-12.</text>
</comment>
<comment type="PTM">
    <text evidence="1">Phosphorylated. Phosphorylation at Tyr-167 by EGFR enhances GTPase accelerating (GAP) activity toward GNAI1.</text>
</comment>
<protein>
    <recommendedName>
        <fullName>Regulator of G-protein signaling 16</fullName>
        <shortName>RGS16</shortName>
    </recommendedName>
    <alternativeName>
        <fullName>Retinal-specific RGS</fullName>
        <shortName>RGS-r</shortName>
    </alternativeName>
    <alternativeName>
        <fullName>Retinally abundant regulator of G-protein signaling</fullName>
    </alternativeName>
</protein>
<dbReference type="SMR" id="P56700"/>
<dbReference type="FunCoup" id="P56700">
    <property type="interactions" value="95"/>
</dbReference>
<dbReference type="STRING" id="10116.ENSRNOP00000029844"/>
<dbReference type="PhosphoSitePlus" id="P56700"/>
<dbReference type="PaxDb" id="10116-ENSRNOP00000029844"/>
<dbReference type="UCSC" id="RGD:1589741">
    <property type="organism name" value="rat"/>
</dbReference>
<dbReference type="AGR" id="RGD:1589741"/>
<dbReference type="RGD" id="1589741">
    <property type="gene designation" value="Rgs16"/>
</dbReference>
<dbReference type="eggNOG" id="KOG3589">
    <property type="taxonomic scope" value="Eukaryota"/>
</dbReference>
<dbReference type="InParanoid" id="P56700"/>
<dbReference type="PhylomeDB" id="P56700"/>
<dbReference type="Reactome" id="R-RNO-416476">
    <property type="pathway name" value="G alpha (q) signalling events"/>
</dbReference>
<dbReference type="Reactome" id="R-RNO-418594">
    <property type="pathway name" value="G alpha (i) signalling events"/>
</dbReference>
<dbReference type="Reactome" id="R-RNO-418597">
    <property type="pathway name" value="G alpha (z) signalling events"/>
</dbReference>
<dbReference type="PRO" id="PR:P56700"/>
<dbReference type="Proteomes" id="UP000002494">
    <property type="component" value="Unplaced"/>
</dbReference>
<dbReference type="GO" id="GO:0005737">
    <property type="term" value="C:cytoplasm"/>
    <property type="evidence" value="ECO:0000266"/>
    <property type="project" value="RGD"/>
</dbReference>
<dbReference type="GO" id="GO:0016020">
    <property type="term" value="C:membrane"/>
    <property type="evidence" value="ECO:0000250"/>
    <property type="project" value="UniProtKB"/>
</dbReference>
<dbReference type="GO" id="GO:0005096">
    <property type="term" value="F:GTPase activator activity"/>
    <property type="evidence" value="ECO:0000250"/>
    <property type="project" value="UniProtKB"/>
</dbReference>
<dbReference type="GO" id="GO:0007186">
    <property type="term" value="P:G protein-coupled receptor signaling pathway"/>
    <property type="evidence" value="ECO:0000250"/>
    <property type="project" value="UniProtKB"/>
</dbReference>
<dbReference type="GO" id="GO:0009968">
    <property type="term" value="P:negative regulation of signal transduction"/>
    <property type="evidence" value="ECO:0007669"/>
    <property type="project" value="UniProtKB-KW"/>
</dbReference>
<dbReference type="GO" id="GO:0043547">
    <property type="term" value="P:positive regulation of GTPase activity"/>
    <property type="evidence" value="ECO:0000250"/>
    <property type="project" value="UniProtKB"/>
</dbReference>
<dbReference type="CDD" id="cd08710">
    <property type="entry name" value="RGS_RGS16"/>
    <property type="match status" value="1"/>
</dbReference>
<dbReference type="FunFam" id="1.10.167.10:FF:000001">
    <property type="entry name" value="Putative regulator of g-protein signaling 12"/>
    <property type="match status" value="1"/>
</dbReference>
<dbReference type="FunFam" id="1.10.196.10:FF:000001">
    <property type="entry name" value="Regulator of G-protein signaling 8"/>
    <property type="match status" value="1"/>
</dbReference>
<dbReference type="Gene3D" id="1.10.196.10">
    <property type="match status" value="1"/>
</dbReference>
<dbReference type="Gene3D" id="1.10.167.10">
    <property type="entry name" value="Regulator of G-protein Signalling 4, domain 2"/>
    <property type="match status" value="1"/>
</dbReference>
<dbReference type="InterPro" id="IPR016137">
    <property type="entry name" value="RGS"/>
</dbReference>
<dbReference type="InterPro" id="IPR036305">
    <property type="entry name" value="RGS_sf"/>
</dbReference>
<dbReference type="InterPro" id="IPR024066">
    <property type="entry name" value="RGS_subdom1/3"/>
</dbReference>
<dbReference type="InterPro" id="IPR044926">
    <property type="entry name" value="RGS_subdomain_2"/>
</dbReference>
<dbReference type="PANTHER" id="PTHR10845">
    <property type="entry name" value="REGULATOR OF G PROTEIN SIGNALING"/>
    <property type="match status" value="1"/>
</dbReference>
<dbReference type="PANTHER" id="PTHR10845:SF187">
    <property type="entry name" value="REGULATOR OF G-PROTEIN SIGNALING 16"/>
    <property type="match status" value="1"/>
</dbReference>
<dbReference type="Pfam" id="PF00615">
    <property type="entry name" value="RGS"/>
    <property type="match status" value="1"/>
</dbReference>
<dbReference type="PRINTS" id="PR01301">
    <property type="entry name" value="RGSPROTEIN"/>
</dbReference>
<dbReference type="SMART" id="SM00315">
    <property type="entry name" value="RGS"/>
    <property type="match status" value="1"/>
</dbReference>
<dbReference type="SUPFAM" id="SSF48097">
    <property type="entry name" value="Regulator of G-protein signaling, RGS"/>
    <property type="match status" value="1"/>
</dbReference>
<dbReference type="PROSITE" id="PS50132">
    <property type="entry name" value="RGS"/>
    <property type="match status" value="1"/>
</dbReference>
<feature type="chain" id="PRO_0000204223" description="Regulator of G-protein signaling 16">
    <location>
        <begin position="1"/>
        <end position="199"/>
    </location>
</feature>
<feature type="domain" description="RGS" evidence="3">
    <location>
        <begin position="64"/>
        <end position="180"/>
    </location>
</feature>
<feature type="modified residue" description="Phosphotyrosine" evidence="1">
    <location>
        <position position="167"/>
    </location>
</feature>
<feature type="modified residue" description="Phosphotyrosine" evidence="1">
    <location>
        <position position="176"/>
    </location>
</feature>
<feature type="lipid moiety-binding region" description="S-palmitoyl cysteine" evidence="2">
    <location>
        <position position="2"/>
    </location>
</feature>
<feature type="lipid moiety-binding region" description="S-palmitoyl cysteine" evidence="2">
    <location>
        <position position="12"/>
    </location>
</feature>
<name>RGS16_RAT</name>
<reference key="1">
    <citation type="journal article" date="1996" name="Proc. Natl. Acad. Sci. U.S.A.">
        <title>RGS-r, a retinal specific RGS protein, binds an intermediate conformation of transducin and enhances recycling.</title>
        <authorList>
            <person name="Chen C.-K."/>
            <person name="Wieland T."/>
            <person name="Simon M.I."/>
        </authorList>
    </citation>
    <scope>NUCLEOTIDE SEQUENCE [MRNA]</scope>
    <scope>TISSUE SPECIFICITY</scope>
    <source>
        <tissue>Retina</tissue>
    </source>
</reference>
<evidence type="ECO:0000250" key="1">
    <source>
        <dbReference type="UniProtKB" id="O15492"/>
    </source>
</evidence>
<evidence type="ECO:0000250" key="2">
    <source>
        <dbReference type="UniProtKB" id="P97428"/>
    </source>
</evidence>
<evidence type="ECO:0000255" key="3">
    <source>
        <dbReference type="PROSITE-ProRule" id="PRU00171"/>
    </source>
</evidence>
<evidence type="ECO:0000269" key="4">
    <source>
    </source>
</evidence>